<keyword id="KW-0169">Cobalamin biosynthesis</keyword>
<keyword id="KW-0378">Hydrolase</keyword>
<keyword id="KW-1185">Reference proteome</keyword>
<sequence length="202" mass="23123">MRLWLVRHGETEANVAGLYSGHAPTPLTEKGIGQAKTLHTLLRHAPFDRVLCSELERARHTARLVLEGRDVPQHILPELNEMYFGDWEMRHHRDLTHEDAESYAAWCTDWQNAVPTNGEGFQAFTRRVERFISRLDAFSDCQNLLIVSHQGVLSLLIARLLTMPAASLWHFRVEQGCWSAIDICEGFATLKVLNSRAVWRPE</sequence>
<proteinExistence type="evidence at protein level"/>
<comment type="function">
    <text evidence="2 3">Catalyzes the conversion of adenosylcobalamin 5'-phosphate to adenosylcobalamin (vitamin B12); involved in the assembly of the nucleotide loop of cobalamin. Also catalyzes the hydrolysis of the phospho group from alpha-ribazole 5'-phosphate to form alpha-ribazole.</text>
</comment>
<comment type="catalytic activity">
    <reaction evidence="2 3">
        <text>adenosylcob(III)alamin 5'-phosphate + H2O = adenosylcob(III)alamin + phosphate</text>
        <dbReference type="Rhea" id="RHEA:30367"/>
        <dbReference type="ChEBI" id="CHEBI:15377"/>
        <dbReference type="ChEBI" id="CHEBI:18408"/>
        <dbReference type="ChEBI" id="CHEBI:43474"/>
        <dbReference type="ChEBI" id="CHEBI:60493"/>
        <dbReference type="EC" id="3.1.3.73"/>
    </reaction>
</comment>
<comment type="catalytic activity">
    <reaction evidence="2 3">
        <text>alpha-ribazole 5'-phosphate + H2O = alpha-ribazole + phosphate</text>
        <dbReference type="Rhea" id="RHEA:24456"/>
        <dbReference type="ChEBI" id="CHEBI:10329"/>
        <dbReference type="ChEBI" id="CHEBI:15377"/>
        <dbReference type="ChEBI" id="CHEBI:43474"/>
        <dbReference type="ChEBI" id="CHEBI:57918"/>
        <dbReference type="EC" id="3.1.3.73"/>
    </reaction>
</comment>
<comment type="pathway">
    <text>Nucleoside biosynthesis; alpha-ribazole biosynthesis; alpha-ribazole from 5,6-dimethylbenzimidazole: step 2/2.</text>
</comment>
<comment type="subunit">
    <text>Monomer.</text>
</comment>
<comment type="similarity">
    <text evidence="4">Belongs to the phosphoglycerate mutase family.</text>
</comment>
<comment type="sequence caution" evidence="4">
    <conflict type="erroneous initiation">
        <sequence resource="EMBL-CDS" id="AAA62874"/>
    </conflict>
    <text>Extended N-terminus.</text>
</comment>
<organism>
    <name type="scientific">Salmonella typhimurium (strain LT2 / SGSC1412 / ATCC 700720)</name>
    <dbReference type="NCBI Taxonomy" id="99287"/>
    <lineage>
        <taxon>Bacteria</taxon>
        <taxon>Pseudomonadati</taxon>
        <taxon>Pseudomonadota</taxon>
        <taxon>Gammaproteobacteria</taxon>
        <taxon>Enterobacterales</taxon>
        <taxon>Enterobacteriaceae</taxon>
        <taxon>Salmonella</taxon>
    </lineage>
</organism>
<name>COBC_SALTY</name>
<reference key="1">
    <citation type="journal article" date="1994" name="J. Biol. Chem.">
        <title>The cobC gene of Salmonella typhimurium codes for a novel phosphatase involved in the assembly of the nucleotide loop of cobalamin.</title>
        <authorList>
            <person name="O'Toole G.A."/>
            <person name="Trzebiatowski J.R."/>
            <person name="Escalante-Semerena J.C."/>
        </authorList>
    </citation>
    <scope>NUCLEOTIDE SEQUENCE [GENOMIC DNA]</scope>
    <scope>FUNCTION</scope>
    <scope>CATALYTIC ACTIVITY</scope>
    <source>
        <strain>LT2 / SGSC1412 / ATCC 700720</strain>
    </source>
</reference>
<reference key="2">
    <citation type="journal article" date="2001" name="Nature">
        <title>Complete genome sequence of Salmonella enterica serovar Typhimurium LT2.</title>
        <authorList>
            <person name="McClelland M."/>
            <person name="Sanderson K.E."/>
            <person name="Spieth J."/>
            <person name="Clifton S.W."/>
            <person name="Latreille P."/>
            <person name="Courtney L."/>
            <person name="Porwollik S."/>
            <person name="Ali J."/>
            <person name="Dante M."/>
            <person name="Du F."/>
            <person name="Hou S."/>
            <person name="Layman D."/>
            <person name="Leonard S."/>
            <person name="Nguyen C."/>
            <person name="Scott K."/>
            <person name="Holmes A."/>
            <person name="Grewal N."/>
            <person name="Mulvaney E."/>
            <person name="Ryan E."/>
            <person name="Sun H."/>
            <person name="Florea L."/>
            <person name="Miller W."/>
            <person name="Stoneking T."/>
            <person name="Nhan M."/>
            <person name="Waterston R."/>
            <person name="Wilson R.K."/>
        </authorList>
    </citation>
    <scope>NUCLEOTIDE SEQUENCE [LARGE SCALE GENOMIC DNA]</scope>
    <source>
        <strain>LT2 / SGSC1412 / ATCC 700720</strain>
    </source>
</reference>
<reference key="3">
    <citation type="journal article" date="2007" name="J. Bacteriol.">
        <title>Reassessment of the late steps of coenzyme B12 synthesis in Salmonella enterica: evidence that dephosphorylation of adenosylcobalamin-5'-phosphate by the CobC phosphatase is the last step of the pathway.</title>
        <authorList>
            <person name="Zayas C.L."/>
            <person name="Escalante-Semerena J.C."/>
        </authorList>
    </citation>
    <scope>FUNCTION</scope>
    <scope>CATALYTIC ACTIVITY</scope>
</reference>
<evidence type="ECO:0000250" key="1">
    <source>
        <dbReference type="UniProtKB" id="P62707"/>
    </source>
</evidence>
<evidence type="ECO:0000269" key="2">
    <source>
    </source>
</evidence>
<evidence type="ECO:0000269" key="3">
    <source>
    </source>
</evidence>
<evidence type="ECO:0000305" key="4"/>
<protein>
    <recommendedName>
        <fullName>Adenosylcobalamin/alpha-ribazole phosphatase</fullName>
        <ecNumber evidence="2 3">3.1.3.73</ecNumber>
    </recommendedName>
    <alternativeName>
        <fullName>Adenosylcobalamin phosphatase</fullName>
    </alternativeName>
    <alternativeName>
        <fullName>Alpha-ribazole-5'-phosphate phosphatase</fullName>
    </alternativeName>
</protein>
<dbReference type="EC" id="3.1.3.73" evidence="2 3"/>
<dbReference type="EMBL" id="U12808">
    <property type="protein sequence ID" value="AAA62874.1"/>
    <property type="status" value="ALT_INIT"/>
    <property type="molecule type" value="Genomic_DNA"/>
</dbReference>
<dbReference type="EMBL" id="AE006468">
    <property type="protein sequence ID" value="AAL19594.1"/>
    <property type="molecule type" value="Genomic_DNA"/>
</dbReference>
<dbReference type="PIR" id="A55367">
    <property type="entry name" value="A55367"/>
</dbReference>
<dbReference type="RefSeq" id="NP_459635.1">
    <property type="nucleotide sequence ID" value="NC_003197.2"/>
</dbReference>
<dbReference type="RefSeq" id="WP_001241924.1">
    <property type="nucleotide sequence ID" value="NC_003197.2"/>
</dbReference>
<dbReference type="SMR" id="P39701"/>
<dbReference type="STRING" id="99287.STM0643"/>
<dbReference type="PaxDb" id="99287-STM0643"/>
<dbReference type="GeneID" id="1252163"/>
<dbReference type="KEGG" id="stm:STM0643"/>
<dbReference type="PATRIC" id="fig|99287.12.peg.679"/>
<dbReference type="HOGENOM" id="CLU_033323_8_4_6"/>
<dbReference type="OMA" id="WLTEPAW"/>
<dbReference type="PhylomeDB" id="P39701"/>
<dbReference type="BioCyc" id="MetaCyc:MONOMER-13213"/>
<dbReference type="BioCyc" id="SENT99287:STM0643-MONOMER"/>
<dbReference type="BRENDA" id="3.1.3.73">
    <property type="organism ID" value="5542"/>
</dbReference>
<dbReference type="UniPathway" id="UPA00061">
    <property type="reaction ID" value="UER00517"/>
</dbReference>
<dbReference type="Proteomes" id="UP000001014">
    <property type="component" value="Chromosome"/>
</dbReference>
<dbReference type="GO" id="GO:0005737">
    <property type="term" value="C:cytoplasm"/>
    <property type="evidence" value="ECO:0000318"/>
    <property type="project" value="GO_Central"/>
</dbReference>
<dbReference type="GO" id="GO:0043755">
    <property type="term" value="F:alpha-ribazole phosphatase activity"/>
    <property type="evidence" value="ECO:0007669"/>
    <property type="project" value="UniProtKB-EC"/>
</dbReference>
<dbReference type="GO" id="GO:0016791">
    <property type="term" value="F:phosphatase activity"/>
    <property type="evidence" value="ECO:0000318"/>
    <property type="project" value="GO_Central"/>
</dbReference>
<dbReference type="GO" id="GO:0009236">
    <property type="term" value="P:cobalamin biosynthetic process"/>
    <property type="evidence" value="ECO:0007669"/>
    <property type="project" value="UniProtKB-KW"/>
</dbReference>
<dbReference type="CDD" id="cd07067">
    <property type="entry name" value="HP_PGM_like"/>
    <property type="match status" value="1"/>
</dbReference>
<dbReference type="Gene3D" id="3.40.50.1240">
    <property type="entry name" value="Phosphoglycerate mutase-like"/>
    <property type="match status" value="1"/>
</dbReference>
<dbReference type="InterPro" id="IPR013078">
    <property type="entry name" value="His_Pase_superF_clade-1"/>
</dbReference>
<dbReference type="InterPro" id="IPR029033">
    <property type="entry name" value="His_PPase_superfam"/>
</dbReference>
<dbReference type="InterPro" id="IPR001345">
    <property type="entry name" value="PG/BPGM_mutase_AS"/>
</dbReference>
<dbReference type="InterPro" id="IPR051695">
    <property type="entry name" value="Phosphoglycerate_Mutase"/>
</dbReference>
<dbReference type="InterPro" id="IPR017578">
    <property type="entry name" value="Ribazole_CobC"/>
</dbReference>
<dbReference type="NCBIfam" id="NF011580">
    <property type="entry name" value="PRK15004.1"/>
    <property type="match status" value="1"/>
</dbReference>
<dbReference type="NCBIfam" id="TIGR03162">
    <property type="entry name" value="ribazole_cobC"/>
    <property type="match status" value="1"/>
</dbReference>
<dbReference type="PANTHER" id="PTHR46517">
    <property type="entry name" value="FRUCTOSE-2,6-BISPHOSPHATASE TIGAR"/>
    <property type="match status" value="1"/>
</dbReference>
<dbReference type="PANTHER" id="PTHR46517:SF1">
    <property type="entry name" value="FRUCTOSE-2,6-BISPHOSPHATASE TIGAR"/>
    <property type="match status" value="1"/>
</dbReference>
<dbReference type="Pfam" id="PF00300">
    <property type="entry name" value="His_Phos_1"/>
    <property type="match status" value="1"/>
</dbReference>
<dbReference type="PIRSF" id="PIRSF000709">
    <property type="entry name" value="6PFK_2-Ptase"/>
    <property type="match status" value="1"/>
</dbReference>
<dbReference type="SMART" id="SM00855">
    <property type="entry name" value="PGAM"/>
    <property type="match status" value="1"/>
</dbReference>
<dbReference type="SUPFAM" id="SSF53254">
    <property type="entry name" value="Phosphoglycerate mutase-like"/>
    <property type="match status" value="1"/>
</dbReference>
<dbReference type="PROSITE" id="PS00175">
    <property type="entry name" value="PG_MUTASE"/>
    <property type="match status" value="1"/>
</dbReference>
<accession>P39701</accession>
<feature type="chain" id="PRO_0000179956" description="Adenosylcobalamin/alpha-ribazole phosphatase">
    <location>
        <begin position="1"/>
        <end position="202"/>
    </location>
</feature>
<feature type="active site" description="Tele-phosphohistidine intermediate" evidence="1">
    <location>
        <position position="8"/>
    </location>
</feature>
<feature type="active site" description="Proton donor/acceptor" evidence="1">
    <location>
        <position position="81"/>
    </location>
</feature>
<feature type="sequence conflict" description="In Ref. 1; AAA62874." evidence="4" ref="1">
    <original>PFDRVLCSELERAR</original>
    <variation>HLTGCYRASWSARA</variation>
    <location>
        <begin position="46"/>
        <end position="59"/>
    </location>
</feature>
<feature type="sequence conflict" description="In Ref. 1; AAA62874." evidence="4" ref="1">
    <original>V</original>
    <variation>C</variation>
    <location>
        <position position="198"/>
    </location>
</feature>
<gene>
    <name type="primary">cobC</name>
    <name type="ordered locus">STM0643</name>
</gene>